<comment type="catalytic activity">
    <reaction evidence="1">
        <text>D-glucose + ATP = D-glucose 6-phosphate + ADP + H(+)</text>
        <dbReference type="Rhea" id="RHEA:17825"/>
        <dbReference type="ChEBI" id="CHEBI:4167"/>
        <dbReference type="ChEBI" id="CHEBI:15378"/>
        <dbReference type="ChEBI" id="CHEBI:30616"/>
        <dbReference type="ChEBI" id="CHEBI:61548"/>
        <dbReference type="ChEBI" id="CHEBI:456216"/>
        <dbReference type="EC" id="2.7.1.2"/>
    </reaction>
</comment>
<comment type="subcellular location">
    <subcellularLocation>
        <location evidence="1">Cytoplasm</location>
    </subcellularLocation>
</comment>
<comment type="similarity">
    <text evidence="1">Belongs to the bacterial glucokinase family.</text>
</comment>
<gene>
    <name evidence="1" type="primary">glk</name>
    <name type="ordered locus">Maqu_1829</name>
</gene>
<feature type="chain" id="PRO_1000050971" description="Glucokinase">
    <location>
        <begin position="1"/>
        <end position="321"/>
    </location>
</feature>
<feature type="binding site" evidence="1">
    <location>
        <begin position="10"/>
        <end position="15"/>
    </location>
    <ligand>
        <name>ATP</name>
        <dbReference type="ChEBI" id="CHEBI:30616"/>
    </ligand>
</feature>
<keyword id="KW-0067">ATP-binding</keyword>
<keyword id="KW-0963">Cytoplasm</keyword>
<keyword id="KW-0324">Glycolysis</keyword>
<keyword id="KW-0418">Kinase</keyword>
<keyword id="KW-0547">Nucleotide-binding</keyword>
<keyword id="KW-0808">Transferase</keyword>
<dbReference type="EC" id="2.7.1.2" evidence="1"/>
<dbReference type="EMBL" id="CP000514">
    <property type="protein sequence ID" value="ABM18911.1"/>
    <property type="molecule type" value="Genomic_DNA"/>
</dbReference>
<dbReference type="RefSeq" id="WP_011785308.1">
    <property type="nucleotide sequence ID" value="NC_008740.1"/>
</dbReference>
<dbReference type="SMR" id="A1U1P2"/>
<dbReference type="STRING" id="351348.Maqu_1829"/>
<dbReference type="KEGG" id="maq:Maqu_1829"/>
<dbReference type="eggNOG" id="COG0837">
    <property type="taxonomic scope" value="Bacteria"/>
</dbReference>
<dbReference type="HOGENOM" id="CLU_042582_1_0_6"/>
<dbReference type="OrthoDB" id="9800595at2"/>
<dbReference type="Proteomes" id="UP000000998">
    <property type="component" value="Chromosome"/>
</dbReference>
<dbReference type="GO" id="GO:0005829">
    <property type="term" value="C:cytosol"/>
    <property type="evidence" value="ECO:0007669"/>
    <property type="project" value="TreeGrafter"/>
</dbReference>
<dbReference type="GO" id="GO:0005524">
    <property type="term" value="F:ATP binding"/>
    <property type="evidence" value="ECO:0007669"/>
    <property type="project" value="UniProtKB-UniRule"/>
</dbReference>
<dbReference type="GO" id="GO:0005536">
    <property type="term" value="F:D-glucose binding"/>
    <property type="evidence" value="ECO:0007669"/>
    <property type="project" value="InterPro"/>
</dbReference>
<dbReference type="GO" id="GO:0004340">
    <property type="term" value="F:glucokinase activity"/>
    <property type="evidence" value="ECO:0007669"/>
    <property type="project" value="UniProtKB-UniRule"/>
</dbReference>
<dbReference type="GO" id="GO:0006096">
    <property type="term" value="P:glycolytic process"/>
    <property type="evidence" value="ECO:0007669"/>
    <property type="project" value="UniProtKB-UniRule"/>
</dbReference>
<dbReference type="CDD" id="cd24008">
    <property type="entry name" value="ASKHA_NBD_GLK"/>
    <property type="match status" value="1"/>
</dbReference>
<dbReference type="Gene3D" id="3.30.420.40">
    <property type="match status" value="1"/>
</dbReference>
<dbReference type="Gene3D" id="3.40.367.20">
    <property type="match status" value="1"/>
</dbReference>
<dbReference type="HAMAP" id="MF_00524">
    <property type="entry name" value="Glucokinase"/>
    <property type="match status" value="1"/>
</dbReference>
<dbReference type="InterPro" id="IPR043129">
    <property type="entry name" value="ATPase_NBD"/>
</dbReference>
<dbReference type="InterPro" id="IPR050201">
    <property type="entry name" value="Bacterial_glucokinase"/>
</dbReference>
<dbReference type="InterPro" id="IPR003836">
    <property type="entry name" value="Glucokinase"/>
</dbReference>
<dbReference type="NCBIfam" id="TIGR00749">
    <property type="entry name" value="glk"/>
    <property type="match status" value="1"/>
</dbReference>
<dbReference type="PANTHER" id="PTHR47690">
    <property type="entry name" value="GLUCOKINASE"/>
    <property type="match status" value="1"/>
</dbReference>
<dbReference type="PANTHER" id="PTHR47690:SF1">
    <property type="entry name" value="GLUCOKINASE"/>
    <property type="match status" value="1"/>
</dbReference>
<dbReference type="Pfam" id="PF02685">
    <property type="entry name" value="Glucokinase"/>
    <property type="match status" value="1"/>
</dbReference>
<dbReference type="SUPFAM" id="SSF53067">
    <property type="entry name" value="Actin-like ATPase domain"/>
    <property type="match status" value="1"/>
</dbReference>
<organism>
    <name type="scientific">Marinobacter nauticus (strain ATCC 700491 / DSM 11845 / VT8)</name>
    <name type="common">Marinobacter aquaeolei</name>
    <dbReference type="NCBI Taxonomy" id="351348"/>
    <lineage>
        <taxon>Bacteria</taxon>
        <taxon>Pseudomonadati</taxon>
        <taxon>Pseudomonadota</taxon>
        <taxon>Gammaproteobacteria</taxon>
        <taxon>Pseudomonadales</taxon>
        <taxon>Marinobacteraceae</taxon>
        <taxon>Marinobacter</taxon>
    </lineage>
</organism>
<evidence type="ECO:0000255" key="1">
    <source>
        <dbReference type="HAMAP-Rule" id="MF_00524"/>
    </source>
</evidence>
<protein>
    <recommendedName>
        <fullName evidence="1">Glucokinase</fullName>
        <ecNumber evidence="1">2.7.1.2</ecNumber>
    </recommendedName>
    <alternativeName>
        <fullName evidence="1">Glucose kinase</fullName>
    </alternativeName>
</protein>
<name>GLK_MARN8</name>
<proteinExistence type="inferred from homology"/>
<accession>A1U1P2</accession>
<reference key="1">
    <citation type="journal article" date="2011" name="Appl. Environ. Microbiol.">
        <title>Genomic potential of Marinobacter aquaeolei, a biogeochemical 'opportunitroph'.</title>
        <authorList>
            <person name="Singer E."/>
            <person name="Webb E.A."/>
            <person name="Nelson W.C."/>
            <person name="Heidelberg J.F."/>
            <person name="Ivanova N."/>
            <person name="Pati A."/>
            <person name="Edwards K.J."/>
        </authorList>
    </citation>
    <scope>NUCLEOTIDE SEQUENCE [LARGE SCALE GENOMIC DNA]</scope>
    <source>
        <strain>ATCC 700491 / DSM 11845 / VT8</strain>
    </source>
</reference>
<sequence>MTAEHYSLVGDIGGTNARFALVKQGSIEPEAIEVLPCRDYENLDQAVVTYLERVGVASVRQACLAVASPLRGTRVTMTNNHWRFDIEAVRQVFGWSAFKVINDFTAMALGVPHVSDANLVHVCGGPGDPGRPKLVMGPGTGLGVSGLVPIRNGWVPLVTEGGHVDFAPTDDTEMDVLRLLRARFGRVSVERILCGQGLLNLYQAHAEIRGVAAPLDAPEKITAAAVDASDALAGEVLQHFCEMLGRTAGNSALTLGSLGGVYLCGGMLPGFLDFFLGSPFREAFVAKGRMRPLMEFTPVYVVTEPYTGLLGAAEALGNSEV</sequence>